<proteinExistence type="inferred from homology"/>
<accession>P17377</accession>
<keyword id="KW-0167">Capsid protein</keyword>
<keyword id="KW-0547">Nucleotide-binding</keyword>
<keyword id="KW-0548">Nucleotidyltransferase</keyword>
<keyword id="KW-0696">RNA-directed RNA polymerase</keyword>
<keyword id="KW-0808">Transferase</keyword>
<keyword id="KW-0693">Viral RNA replication</keyword>
<keyword id="KW-0946">Virion</keyword>
<dbReference type="EC" id="2.7.7.48"/>
<dbReference type="EMBL" id="M31057">
    <property type="protein sequence ID" value="AAA47245.1"/>
    <property type="molecule type" value="Genomic_RNA"/>
</dbReference>
<dbReference type="PIR" id="B30121">
    <property type="entry name" value="MWXR32"/>
</dbReference>
<dbReference type="SMR" id="P17377"/>
<dbReference type="Proteomes" id="UP000006370">
    <property type="component" value="Genome"/>
</dbReference>
<dbReference type="GO" id="GO:0019013">
    <property type="term" value="C:viral nucleocapsid"/>
    <property type="evidence" value="ECO:0007669"/>
    <property type="project" value="InterPro"/>
</dbReference>
<dbReference type="GO" id="GO:0000166">
    <property type="term" value="F:nucleotide binding"/>
    <property type="evidence" value="ECO:0007669"/>
    <property type="project" value="UniProtKB-KW"/>
</dbReference>
<dbReference type="GO" id="GO:0003723">
    <property type="term" value="F:RNA binding"/>
    <property type="evidence" value="ECO:0007669"/>
    <property type="project" value="InterPro"/>
</dbReference>
<dbReference type="GO" id="GO:0003968">
    <property type="term" value="F:RNA-directed RNA polymerase activity"/>
    <property type="evidence" value="ECO:0007669"/>
    <property type="project" value="UniProtKB-KW"/>
</dbReference>
<dbReference type="GO" id="GO:0019079">
    <property type="term" value="P:viral genome replication"/>
    <property type="evidence" value="ECO:0007669"/>
    <property type="project" value="InterPro"/>
</dbReference>
<dbReference type="Gene3D" id="3.90.1850.10">
    <property type="entry name" value="RNA-directed RNA polymerase lambda-3"/>
    <property type="match status" value="1"/>
</dbReference>
<dbReference type="InterPro" id="IPR043502">
    <property type="entry name" value="DNA/RNA_pol_sf"/>
</dbReference>
<dbReference type="InterPro" id="IPR012915">
    <property type="entry name" value="RdRP_5"/>
</dbReference>
<dbReference type="InterPro" id="IPR007097">
    <property type="entry name" value="RNA-dir_pol_reovirus"/>
</dbReference>
<dbReference type="Pfam" id="PF07925">
    <property type="entry name" value="RdRP_5"/>
    <property type="match status" value="1"/>
</dbReference>
<dbReference type="SUPFAM" id="SSF56672">
    <property type="entry name" value="DNA/RNA polymerases"/>
    <property type="match status" value="1"/>
</dbReference>
<dbReference type="PROSITE" id="PS50523">
    <property type="entry name" value="RDRP_DSRNA_REO"/>
    <property type="match status" value="1"/>
</dbReference>
<organismHost>
    <name type="scientific">Mammalia</name>
    <dbReference type="NCBI Taxonomy" id="40674"/>
</organismHost>
<comment type="function">
    <text>RNA-directed RNA polymerase that is involved in transcription and genome replication. Following infection, it catalyzes the synthesis of fully conservative plus strands. After core assembly, which consists in recruitment of one capped plus-strand for each genomic segments and polymerase complexes, the polymerase switches mode and catalyzes the synthesis of complementary minus-strands.</text>
</comment>
<comment type="catalytic activity">
    <reaction evidence="1">
        <text>RNA(n) + a ribonucleoside 5'-triphosphate = RNA(n+1) + diphosphate</text>
        <dbReference type="Rhea" id="RHEA:21248"/>
        <dbReference type="Rhea" id="RHEA-COMP:14527"/>
        <dbReference type="Rhea" id="RHEA-COMP:17342"/>
        <dbReference type="ChEBI" id="CHEBI:33019"/>
        <dbReference type="ChEBI" id="CHEBI:61557"/>
        <dbReference type="ChEBI" id="CHEBI:140395"/>
        <dbReference type="EC" id="2.7.7.48"/>
    </reaction>
</comment>
<comment type="subcellular location">
    <subcellularLocation>
        <location evidence="2">Virion</location>
    </subcellularLocation>
    <text>Found in the inner capsid (12 copies).</text>
</comment>
<comment type="similarity">
    <text evidence="2">Belongs to the reoviridae RNA-directed RNA polymerase family.</text>
</comment>
<sequence>MSSTILTQFGPFIESISGIIDQSNDIFEEAAKAFSAFTRSDVYKALDEIPFHDHATVHIPPTIYSKPSHDSYYYVDALNRVRRRTYQGDDDVYVPNCSIVELLEPHETLTSYGRLSSAIEARAKEGDPQARIATTYARISESQARQIKAPLEKFVLALLVAESGDALYDPILQKYDDVADLTHNCPLWCFREICRHVSGPLPDRAPYLYLSAGVFWLMSPRMTSAIPPLLSDLVNLAILQQTAGLDPSLVKMGVQVCLQAAASASYAWYVLKTKSVFPQNTLHSMYETLEGGFCPNLAWLEPRSDYKFMYMGATPLSGKYARTAPSNETRARQLGEKYGLSTIIGDLRQRTRQFTKHDFASVRYIRDAMACTSGIFLVRTPTETVLQEYTQSPEIKVPIPQKDWTGPIGEIRVLKDTTSSIARYLYRTWYLAAARMASQPRTWDPLFQAIMRSQYVTARGGSGAALRESLYAINVSLPDFKGLPVKAATKIFQAAQLANLPFSHTSVAILADTSMGLRNQVQRRPRSIMPLNVPQQQVSAPHTLTADYINYHMNLSTTSGSAVIEKVIPLGVYASSPPNQSINIDISACDASITWDFFLSVIMAAIHEGVASSSIGKPFMGVPASIVNDESVVGVRAARPISGMQNMVQHLSKLYKRGFSYRVNDSFSPGNDFTHMTTTFPSGSTATSTEHTANNSTMMETFLNVWGPEHTNDPDVLRLMRSLTIQRNYVCQGDDGLMIIDGTTAGKVSSETIQKMLELISAYGEEFGWKYDIAYDGTAEYLKLYFIFGCRIPNLSRHPIVGKERANSSAEEPWPAILDQVMGIFFNGVHDGLQWQRWIRYCSSLCCAFSRQRTMIGEEVRYLQYPMWSFVYWGLPPVKLFGSDPWIFSWYMPTGDLGMYSWISLIRPLMTRWMVANGYVSERCSSIFGNADYRRCFNDIRLYQGYYMARLPRNPKKSGRAAPRETREQFTQALSDYLMQNPELKSRVLRGRSEWEKYGAGIIHNPPSLFDVPHKWYQGAQEAATATREELSDMDDTLLRSRRHTYSSFSKLLEAYLRVRWRMCEAREPSVDLRLPLCAGIDPLNSDPFLKMVSVGPMLQSTRKYFAQTLFMAKTVSGLDVNAIDSALLRLRTLGADKKALTAQLLMVGLQESEADALAGKIMLQDVNTVQLARVVNLAVPDTWMSLDFDSMFKHHVNLLPKDGRHLNTDIPPRMGWLRAILRFLGAGVAMTATGVAVNVYLEDIDGGGRSLGQRFMTWMRQEGRSA</sequence>
<reference key="1">
    <citation type="journal article" date="1989" name="Virology">
        <title>The sequences of the reovirus serotype 1, 2, and 3 L1 genome segments and analysis of the mode of divergence of the reovirus serotypes.</title>
        <authorList>
            <person name="Wiener J.R."/>
            <person name="Joklik W.K."/>
        </authorList>
    </citation>
    <scope>NUCLEOTIDE SEQUENCE [GENOMIC RNA]</scope>
</reference>
<feature type="chain" id="PRO_0000222744" description="RNA-directed RNA polymerase lambda-3">
    <location>
        <begin position="1"/>
        <end position="1267"/>
    </location>
</feature>
<feature type="domain" description="RdRp catalytic" evidence="1">
    <location>
        <begin position="555"/>
        <end position="792"/>
    </location>
</feature>
<name>RDRP_REOVJ</name>
<organism>
    <name type="scientific">Reovirus type 2 (strain D5/Jones)</name>
    <name type="common">T2J</name>
    <name type="synonym">Mammalian orthoreovirus 2</name>
    <dbReference type="NCBI Taxonomy" id="10885"/>
    <lineage>
        <taxon>Viruses</taxon>
        <taxon>Riboviria</taxon>
        <taxon>Orthornavirae</taxon>
        <taxon>Duplornaviricota</taxon>
        <taxon>Resentoviricetes</taxon>
        <taxon>Reovirales</taxon>
        <taxon>Spinareoviridae</taxon>
        <taxon>Orthoreovirus</taxon>
        <taxon>Mammalian orthoreovirus</taxon>
    </lineage>
</organism>
<protein>
    <recommendedName>
        <fullName>RNA-directed RNA polymerase lambda-3</fullName>
        <shortName>Lambda3</shortName>
        <ecNumber>2.7.7.48</ecNumber>
    </recommendedName>
    <alternativeName>
        <fullName>Lambda3(Pol)</fullName>
    </alternativeName>
</protein>
<evidence type="ECO:0000255" key="1">
    <source>
        <dbReference type="PROSITE-ProRule" id="PRU00539"/>
    </source>
</evidence>
<evidence type="ECO:0000305" key="2"/>
<gene>
    <name type="primary">L1</name>
</gene>